<protein>
    <recommendedName>
        <fullName evidence="1">Glycerol-3-phosphate dehydrogenase [NAD(P)+]</fullName>
        <ecNumber evidence="1">1.1.1.94</ecNumber>
    </recommendedName>
    <alternativeName>
        <fullName evidence="1">NAD(P)(+)-dependent glycerol-3-phosphate dehydrogenase</fullName>
    </alternativeName>
    <alternativeName>
        <fullName evidence="1">NAD(P)H-dependent dihydroxyacetone-phosphate reductase</fullName>
    </alternativeName>
</protein>
<feature type="chain" id="PRO_1000190134" description="Glycerol-3-phosphate dehydrogenase [NAD(P)+]">
    <location>
        <begin position="1"/>
        <end position="336"/>
    </location>
</feature>
<feature type="active site" description="Proton acceptor" evidence="1">
    <location>
        <position position="196"/>
    </location>
</feature>
<feature type="binding site" evidence="1">
    <location>
        <position position="11"/>
    </location>
    <ligand>
        <name>NADPH</name>
        <dbReference type="ChEBI" id="CHEBI:57783"/>
    </ligand>
</feature>
<feature type="binding site" evidence="1">
    <location>
        <position position="33"/>
    </location>
    <ligand>
        <name>NADPH</name>
        <dbReference type="ChEBI" id="CHEBI:57783"/>
    </ligand>
</feature>
<feature type="binding site" evidence="1">
    <location>
        <position position="105"/>
    </location>
    <ligand>
        <name>NADPH</name>
        <dbReference type="ChEBI" id="CHEBI:57783"/>
    </ligand>
</feature>
<feature type="binding site" evidence="1">
    <location>
        <position position="105"/>
    </location>
    <ligand>
        <name>sn-glycerol 3-phosphate</name>
        <dbReference type="ChEBI" id="CHEBI:57597"/>
    </ligand>
</feature>
<feature type="binding site" evidence="1">
    <location>
        <position position="141"/>
    </location>
    <ligand>
        <name>sn-glycerol 3-phosphate</name>
        <dbReference type="ChEBI" id="CHEBI:57597"/>
    </ligand>
</feature>
<feature type="binding site" evidence="1">
    <location>
        <position position="143"/>
    </location>
    <ligand>
        <name>sn-glycerol 3-phosphate</name>
        <dbReference type="ChEBI" id="CHEBI:57597"/>
    </ligand>
</feature>
<feature type="binding site" evidence="1">
    <location>
        <position position="145"/>
    </location>
    <ligand>
        <name>NADPH</name>
        <dbReference type="ChEBI" id="CHEBI:57783"/>
    </ligand>
</feature>
<feature type="binding site" evidence="1">
    <location>
        <position position="196"/>
    </location>
    <ligand>
        <name>sn-glycerol 3-phosphate</name>
        <dbReference type="ChEBI" id="CHEBI:57597"/>
    </ligand>
</feature>
<feature type="binding site" evidence="1">
    <location>
        <position position="249"/>
    </location>
    <ligand>
        <name>sn-glycerol 3-phosphate</name>
        <dbReference type="ChEBI" id="CHEBI:57597"/>
    </ligand>
</feature>
<feature type="binding site" evidence="1">
    <location>
        <position position="259"/>
    </location>
    <ligand>
        <name>sn-glycerol 3-phosphate</name>
        <dbReference type="ChEBI" id="CHEBI:57597"/>
    </ligand>
</feature>
<feature type="binding site" evidence="1">
    <location>
        <position position="260"/>
    </location>
    <ligand>
        <name>NADPH</name>
        <dbReference type="ChEBI" id="CHEBI:57783"/>
    </ligand>
</feature>
<feature type="binding site" evidence="1">
    <location>
        <position position="260"/>
    </location>
    <ligand>
        <name>sn-glycerol 3-phosphate</name>
        <dbReference type="ChEBI" id="CHEBI:57597"/>
    </ligand>
</feature>
<feature type="binding site" evidence="1">
    <location>
        <position position="261"/>
    </location>
    <ligand>
        <name>sn-glycerol 3-phosphate</name>
        <dbReference type="ChEBI" id="CHEBI:57597"/>
    </ligand>
</feature>
<feature type="binding site" evidence="1">
    <location>
        <position position="284"/>
    </location>
    <ligand>
        <name>NADPH</name>
        <dbReference type="ChEBI" id="CHEBI:57783"/>
    </ligand>
</feature>
<feature type="binding site" evidence="1">
    <location>
        <position position="286"/>
    </location>
    <ligand>
        <name>NADPH</name>
        <dbReference type="ChEBI" id="CHEBI:57783"/>
    </ligand>
</feature>
<organism>
    <name type="scientific">Delftia acidovorans (strain DSM 14801 / SPH-1)</name>
    <dbReference type="NCBI Taxonomy" id="398578"/>
    <lineage>
        <taxon>Bacteria</taxon>
        <taxon>Pseudomonadati</taxon>
        <taxon>Pseudomonadota</taxon>
        <taxon>Betaproteobacteria</taxon>
        <taxon>Burkholderiales</taxon>
        <taxon>Comamonadaceae</taxon>
        <taxon>Delftia</taxon>
    </lineage>
</organism>
<reference key="1">
    <citation type="submission" date="2007-11" db="EMBL/GenBank/DDBJ databases">
        <title>Complete sequence of Delftia acidovorans DSM 14801 / SPH-1.</title>
        <authorList>
            <person name="Copeland A."/>
            <person name="Lucas S."/>
            <person name="Lapidus A."/>
            <person name="Barry K."/>
            <person name="Glavina del Rio T."/>
            <person name="Dalin E."/>
            <person name="Tice H."/>
            <person name="Pitluck S."/>
            <person name="Lowry S."/>
            <person name="Clum A."/>
            <person name="Schmutz J."/>
            <person name="Larimer F."/>
            <person name="Land M."/>
            <person name="Hauser L."/>
            <person name="Kyrpides N."/>
            <person name="Kim E."/>
            <person name="Schleheck D."/>
            <person name="Richardson P."/>
        </authorList>
    </citation>
    <scope>NUCLEOTIDE SEQUENCE [LARGE SCALE GENOMIC DNA]</scope>
    <source>
        <strain>DSM 14801 / SPH-1</strain>
    </source>
</reference>
<keyword id="KW-0963">Cytoplasm</keyword>
<keyword id="KW-0444">Lipid biosynthesis</keyword>
<keyword id="KW-0443">Lipid metabolism</keyword>
<keyword id="KW-0520">NAD</keyword>
<keyword id="KW-0521">NADP</keyword>
<keyword id="KW-0547">Nucleotide-binding</keyword>
<keyword id="KW-0560">Oxidoreductase</keyword>
<keyword id="KW-0594">Phospholipid biosynthesis</keyword>
<keyword id="KW-1208">Phospholipid metabolism</keyword>
<keyword id="KW-1185">Reference proteome</keyword>
<proteinExistence type="inferred from homology"/>
<name>GPDA_DELAS</name>
<gene>
    <name evidence="1" type="primary">gpsA</name>
    <name type="ordered locus">Daci_1817</name>
</gene>
<accession>A9BUZ7</accession>
<dbReference type="EC" id="1.1.1.94" evidence="1"/>
<dbReference type="EMBL" id="CP000884">
    <property type="protein sequence ID" value="ABX34459.1"/>
    <property type="molecule type" value="Genomic_DNA"/>
</dbReference>
<dbReference type="RefSeq" id="WP_012203744.1">
    <property type="nucleotide sequence ID" value="NC_010002.1"/>
</dbReference>
<dbReference type="SMR" id="A9BUZ7"/>
<dbReference type="STRING" id="398578.Daci_1817"/>
<dbReference type="GeneID" id="24113509"/>
<dbReference type="KEGG" id="dac:Daci_1817"/>
<dbReference type="eggNOG" id="COG0240">
    <property type="taxonomic scope" value="Bacteria"/>
</dbReference>
<dbReference type="HOGENOM" id="CLU_033449_0_2_4"/>
<dbReference type="UniPathway" id="UPA00940"/>
<dbReference type="Proteomes" id="UP000000784">
    <property type="component" value="Chromosome"/>
</dbReference>
<dbReference type="GO" id="GO:0005829">
    <property type="term" value="C:cytosol"/>
    <property type="evidence" value="ECO:0007669"/>
    <property type="project" value="TreeGrafter"/>
</dbReference>
<dbReference type="GO" id="GO:0047952">
    <property type="term" value="F:glycerol-3-phosphate dehydrogenase [NAD(P)+] activity"/>
    <property type="evidence" value="ECO:0007669"/>
    <property type="project" value="UniProtKB-UniRule"/>
</dbReference>
<dbReference type="GO" id="GO:0051287">
    <property type="term" value="F:NAD binding"/>
    <property type="evidence" value="ECO:0007669"/>
    <property type="project" value="InterPro"/>
</dbReference>
<dbReference type="GO" id="GO:0005975">
    <property type="term" value="P:carbohydrate metabolic process"/>
    <property type="evidence" value="ECO:0007669"/>
    <property type="project" value="InterPro"/>
</dbReference>
<dbReference type="GO" id="GO:0046167">
    <property type="term" value="P:glycerol-3-phosphate biosynthetic process"/>
    <property type="evidence" value="ECO:0007669"/>
    <property type="project" value="UniProtKB-UniRule"/>
</dbReference>
<dbReference type="GO" id="GO:0046168">
    <property type="term" value="P:glycerol-3-phosphate catabolic process"/>
    <property type="evidence" value="ECO:0007669"/>
    <property type="project" value="InterPro"/>
</dbReference>
<dbReference type="GO" id="GO:0006650">
    <property type="term" value="P:glycerophospholipid metabolic process"/>
    <property type="evidence" value="ECO:0007669"/>
    <property type="project" value="UniProtKB-UniRule"/>
</dbReference>
<dbReference type="GO" id="GO:0008654">
    <property type="term" value="P:phospholipid biosynthetic process"/>
    <property type="evidence" value="ECO:0007669"/>
    <property type="project" value="UniProtKB-KW"/>
</dbReference>
<dbReference type="FunFam" id="1.10.1040.10:FF:000001">
    <property type="entry name" value="Glycerol-3-phosphate dehydrogenase [NAD(P)+]"/>
    <property type="match status" value="1"/>
</dbReference>
<dbReference type="Gene3D" id="1.10.1040.10">
    <property type="entry name" value="N-(1-d-carboxylethyl)-l-norvaline Dehydrogenase, domain 2"/>
    <property type="match status" value="1"/>
</dbReference>
<dbReference type="Gene3D" id="3.40.50.720">
    <property type="entry name" value="NAD(P)-binding Rossmann-like Domain"/>
    <property type="match status" value="1"/>
</dbReference>
<dbReference type="HAMAP" id="MF_00394">
    <property type="entry name" value="NAD_Glyc3P_dehydrog"/>
    <property type="match status" value="1"/>
</dbReference>
<dbReference type="InterPro" id="IPR008927">
    <property type="entry name" value="6-PGluconate_DH-like_C_sf"/>
</dbReference>
<dbReference type="InterPro" id="IPR013328">
    <property type="entry name" value="6PGD_dom2"/>
</dbReference>
<dbReference type="InterPro" id="IPR006168">
    <property type="entry name" value="G3P_DH_NAD-dep"/>
</dbReference>
<dbReference type="InterPro" id="IPR006109">
    <property type="entry name" value="G3P_DH_NAD-dep_C"/>
</dbReference>
<dbReference type="InterPro" id="IPR011128">
    <property type="entry name" value="G3P_DH_NAD-dep_N"/>
</dbReference>
<dbReference type="InterPro" id="IPR036291">
    <property type="entry name" value="NAD(P)-bd_dom_sf"/>
</dbReference>
<dbReference type="NCBIfam" id="NF000940">
    <property type="entry name" value="PRK00094.1-2"/>
    <property type="match status" value="1"/>
</dbReference>
<dbReference type="NCBIfam" id="NF000942">
    <property type="entry name" value="PRK00094.1-4"/>
    <property type="match status" value="1"/>
</dbReference>
<dbReference type="PANTHER" id="PTHR11728">
    <property type="entry name" value="GLYCEROL-3-PHOSPHATE DEHYDROGENASE"/>
    <property type="match status" value="1"/>
</dbReference>
<dbReference type="PANTHER" id="PTHR11728:SF1">
    <property type="entry name" value="GLYCEROL-3-PHOSPHATE DEHYDROGENASE [NAD(+)] 2, CHLOROPLASTIC"/>
    <property type="match status" value="1"/>
</dbReference>
<dbReference type="Pfam" id="PF07479">
    <property type="entry name" value="NAD_Gly3P_dh_C"/>
    <property type="match status" value="1"/>
</dbReference>
<dbReference type="Pfam" id="PF01210">
    <property type="entry name" value="NAD_Gly3P_dh_N"/>
    <property type="match status" value="1"/>
</dbReference>
<dbReference type="PIRSF" id="PIRSF000114">
    <property type="entry name" value="Glycerol-3-P_dh"/>
    <property type="match status" value="1"/>
</dbReference>
<dbReference type="PRINTS" id="PR00077">
    <property type="entry name" value="GPDHDRGNASE"/>
</dbReference>
<dbReference type="SUPFAM" id="SSF48179">
    <property type="entry name" value="6-phosphogluconate dehydrogenase C-terminal domain-like"/>
    <property type="match status" value="1"/>
</dbReference>
<dbReference type="SUPFAM" id="SSF51735">
    <property type="entry name" value="NAD(P)-binding Rossmann-fold domains"/>
    <property type="match status" value="1"/>
</dbReference>
<dbReference type="PROSITE" id="PS00957">
    <property type="entry name" value="NAD_G3PDH"/>
    <property type="match status" value="1"/>
</dbReference>
<evidence type="ECO:0000255" key="1">
    <source>
        <dbReference type="HAMAP-Rule" id="MF_00394"/>
    </source>
</evidence>
<sequence length="336" mass="34612">MNIVVIGAGAWGTALAMSAAARGDGRVVTLWARDAAQAQAMRDSGENARYLPGVALPAALQVVHGEIDGHLAAADLIVIGTPMAALREWLGRLQHVPAPVAWLCKGFEAVPAGASAAAHGLMAHEVCAEVAPDLLCGVLSGPSFAAEVARHQPTALVAASRHAEVNDALVAAFHGDAMRVYANADIVGVEVGGAVKNVLAIATGLCDGLQLGLNARAALITRGLAEMTRLGLALGARTETFMGLSGLGDLVLTATGDLSRNRKVGLLLAQGRTLEQAVASLGHVAEGVYSARTVLARARLLNVEMPITETVVELLDGRLQAAEAVQHLMARDPRGE</sequence>
<comment type="function">
    <text evidence="1">Catalyzes the reduction of the glycolytic intermediate dihydroxyacetone phosphate (DHAP) to sn-glycerol 3-phosphate (G3P), the key precursor for phospholipid synthesis.</text>
</comment>
<comment type="catalytic activity">
    <reaction evidence="1">
        <text>sn-glycerol 3-phosphate + NAD(+) = dihydroxyacetone phosphate + NADH + H(+)</text>
        <dbReference type="Rhea" id="RHEA:11092"/>
        <dbReference type="ChEBI" id="CHEBI:15378"/>
        <dbReference type="ChEBI" id="CHEBI:57540"/>
        <dbReference type="ChEBI" id="CHEBI:57597"/>
        <dbReference type="ChEBI" id="CHEBI:57642"/>
        <dbReference type="ChEBI" id="CHEBI:57945"/>
        <dbReference type="EC" id="1.1.1.94"/>
    </reaction>
    <physiologicalReaction direction="right-to-left" evidence="1">
        <dbReference type="Rhea" id="RHEA:11094"/>
    </physiologicalReaction>
</comment>
<comment type="catalytic activity">
    <reaction evidence="1">
        <text>sn-glycerol 3-phosphate + NADP(+) = dihydroxyacetone phosphate + NADPH + H(+)</text>
        <dbReference type="Rhea" id="RHEA:11096"/>
        <dbReference type="ChEBI" id="CHEBI:15378"/>
        <dbReference type="ChEBI" id="CHEBI:57597"/>
        <dbReference type="ChEBI" id="CHEBI:57642"/>
        <dbReference type="ChEBI" id="CHEBI:57783"/>
        <dbReference type="ChEBI" id="CHEBI:58349"/>
        <dbReference type="EC" id="1.1.1.94"/>
    </reaction>
    <physiologicalReaction direction="right-to-left" evidence="1">
        <dbReference type="Rhea" id="RHEA:11098"/>
    </physiologicalReaction>
</comment>
<comment type="pathway">
    <text evidence="1">Membrane lipid metabolism; glycerophospholipid metabolism.</text>
</comment>
<comment type="subcellular location">
    <subcellularLocation>
        <location evidence="1">Cytoplasm</location>
    </subcellularLocation>
</comment>
<comment type="similarity">
    <text evidence="1">Belongs to the NAD-dependent glycerol-3-phosphate dehydrogenase family.</text>
</comment>